<feature type="chain" id="PRO_1000077089" description="tRNA pseudouridine synthase A">
    <location>
        <begin position="1"/>
        <end position="270"/>
    </location>
</feature>
<feature type="region of interest" description="RNA binding" evidence="1">
    <location>
        <begin position="107"/>
        <end position="111"/>
    </location>
</feature>
<feature type="region of interest" description="Interaction with tRNA" evidence="1">
    <location>
        <begin position="168"/>
        <end position="172"/>
    </location>
</feature>
<feature type="active site" description="Nucleophile" evidence="1">
    <location>
        <position position="60"/>
    </location>
</feature>
<feature type="binding site" evidence="1">
    <location>
        <position position="118"/>
    </location>
    <ligand>
        <name>substrate</name>
    </ligand>
</feature>
<feature type="site" description="Interaction with tRNA; Important for base-flipping" evidence="1">
    <location>
        <position position="58"/>
    </location>
</feature>
<feature type="site" description="Interaction with tRNA" evidence="1">
    <location>
        <position position="78"/>
    </location>
</feature>
<feature type="site" description="Interaction with tRNA" evidence="1">
    <location>
        <position position="110"/>
    </location>
</feature>
<feature type="site" description="Interaction with tRNA" evidence="1">
    <location>
        <position position="126"/>
    </location>
</feature>
<feature type="site" description="Interaction with tRNA" evidence="1">
    <location>
        <position position="139"/>
    </location>
</feature>
<keyword id="KW-0413">Isomerase</keyword>
<keyword id="KW-0819">tRNA processing</keyword>
<name>TRUA_ECOLC</name>
<gene>
    <name evidence="1" type="primary">truA</name>
    <name type="ordered locus">EcolC_1334</name>
</gene>
<accession>B1IXM4</accession>
<proteinExistence type="inferred from homology"/>
<evidence type="ECO:0000255" key="1">
    <source>
        <dbReference type="HAMAP-Rule" id="MF_00171"/>
    </source>
</evidence>
<dbReference type="EC" id="5.4.99.12" evidence="1"/>
<dbReference type="EMBL" id="CP000946">
    <property type="protein sequence ID" value="ACA77000.1"/>
    <property type="molecule type" value="Genomic_DNA"/>
</dbReference>
<dbReference type="RefSeq" id="WP_001283585.1">
    <property type="nucleotide sequence ID" value="NZ_MTFT01000028.1"/>
</dbReference>
<dbReference type="SMR" id="B1IXM4"/>
<dbReference type="KEGG" id="ecl:EcolC_1334"/>
<dbReference type="HOGENOM" id="CLU_014673_0_2_6"/>
<dbReference type="GO" id="GO:0003723">
    <property type="term" value="F:RNA binding"/>
    <property type="evidence" value="ECO:0007669"/>
    <property type="project" value="InterPro"/>
</dbReference>
<dbReference type="GO" id="GO:0160147">
    <property type="term" value="F:tRNA pseudouridine(38-40) synthase activity"/>
    <property type="evidence" value="ECO:0007669"/>
    <property type="project" value="UniProtKB-EC"/>
</dbReference>
<dbReference type="GO" id="GO:0031119">
    <property type="term" value="P:tRNA pseudouridine synthesis"/>
    <property type="evidence" value="ECO:0007669"/>
    <property type="project" value="UniProtKB-UniRule"/>
</dbReference>
<dbReference type="CDD" id="cd02570">
    <property type="entry name" value="PseudoU_synth_EcTruA"/>
    <property type="match status" value="1"/>
</dbReference>
<dbReference type="FunFam" id="3.30.70.580:FF:000001">
    <property type="entry name" value="tRNA pseudouridine synthase A"/>
    <property type="match status" value="1"/>
</dbReference>
<dbReference type="FunFam" id="3.30.70.660:FF:000001">
    <property type="entry name" value="tRNA pseudouridine synthase A"/>
    <property type="match status" value="1"/>
</dbReference>
<dbReference type="Gene3D" id="3.30.70.660">
    <property type="entry name" value="Pseudouridine synthase I, catalytic domain, C-terminal subdomain"/>
    <property type="match status" value="1"/>
</dbReference>
<dbReference type="Gene3D" id="3.30.70.580">
    <property type="entry name" value="Pseudouridine synthase I, catalytic domain, N-terminal subdomain"/>
    <property type="match status" value="1"/>
</dbReference>
<dbReference type="HAMAP" id="MF_00171">
    <property type="entry name" value="TruA"/>
    <property type="match status" value="1"/>
</dbReference>
<dbReference type="InterPro" id="IPR020103">
    <property type="entry name" value="PsdUridine_synth_cat_dom_sf"/>
</dbReference>
<dbReference type="InterPro" id="IPR001406">
    <property type="entry name" value="PsdUridine_synth_TruA"/>
</dbReference>
<dbReference type="InterPro" id="IPR020097">
    <property type="entry name" value="PsdUridine_synth_TruA_a/b_dom"/>
</dbReference>
<dbReference type="InterPro" id="IPR020095">
    <property type="entry name" value="PsdUridine_synth_TruA_C"/>
</dbReference>
<dbReference type="InterPro" id="IPR020094">
    <property type="entry name" value="TruA/RsuA/RluB/E/F_N"/>
</dbReference>
<dbReference type="NCBIfam" id="TIGR00071">
    <property type="entry name" value="hisT_truA"/>
    <property type="match status" value="1"/>
</dbReference>
<dbReference type="PANTHER" id="PTHR11142">
    <property type="entry name" value="PSEUDOURIDYLATE SYNTHASE"/>
    <property type="match status" value="1"/>
</dbReference>
<dbReference type="PANTHER" id="PTHR11142:SF0">
    <property type="entry name" value="TRNA PSEUDOURIDINE SYNTHASE-LIKE 1"/>
    <property type="match status" value="1"/>
</dbReference>
<dbReference type="Pfam" id="PF01416">
    <property type="entry name" value="PseudoU_synth_1"/>
    <property type="match status" value="2"/>
</dbReference>
<dbReference type="PIRSF" id="PIRSF001430">
    <property type="entry name" value="tRNA_psdUrid_synth"/>
    <property type="match status" value="1"/>
</dbReference>
<dbReference type="SUPFAM" id="SSF55120">
    <property type="entry name" value="Pseudouridine synthase"/>
    <property type="match status" value="1"/>
</dbReference>
<comment type="function">
    <text evidence="1">Formation of pseudouridine at positions 38, 39 and 40 in the anticodon stem and loop of transfer RNAs.</text>
</comment>
<comment type="catalytic activity">
    <reaction evidence="1">
        <text>uridine(38/39/40) in tRNA = pseudouridine(38/39/40) in tRNA</text>
        <dbReference type="Rhea" id="RHEA:22376"/>
        <dbReference type="Rhea" id="RHEA-COMP:10085"/>
        <dbReference type="Rhea" id="RHEA-COMP:10087"/>
        <dbReference type="ChEBI" id="CHEBI:65314"/>
        <dbReference type="ChEBI" id="CHEBI:65315"/>
        <dbReference type="EC" id="5.4.99.12"/>
    </reaction>
</comment>
<comment type="subunit">
    <text evidence="1">Homodimer.</text>
</comment>
<comment type="similarity">
    <text evidence="1">Belongs to the tRNA pseudouridine synthase TruA family.</text>
</comment>
<organism>
    <name type="scientific">Escherichia coli (strain ATCC 8739 / DSM 1576 / NBRC 3972 / NCIMB 8545 / WDCM 00012 / Crooks)</name>
    <dbReference type="NCBI Taxonomy" id="481805"/>
    <lineage>
        <taxon>Bacteria</taxon>
        <taxon>Pseudomonadati</taxon>
        <taxon>Pseudomonadota</taxon>
        <taxon>Gammaproteobacteria</taxon>
        <taxon>Enterobacterales</taxon>
        <taxon>Enterobacteriaceae</taxon>
        <taxon>Escherichia</taxon>
    </lineage>
</organism>
<sequence length="270" mass="30370">MSDQQQPPVYKIALGIEYDGSKYYGWQRQNEVRSVQEKLEKALSQVANEPITVFCAGRTDAGVHGTGQVVHFETTALRKDAAWTLGVNANLPGDIAVRWVKAVPDDFHARFSATARRYRYIIYNHRLRPAVLSKGVTHFYEPLDAERMHRAAQCLLGENDFTSFRAVQCQSRTPWRNVMHINVTRHGPYVVVDIKANAFVHHMVRNIVGSLMEVGAHNQPESWIAELLAAKDRTLAAATAKAEGLYLVAVDYPDRYDLPKPPMGPLFLAD</sequence>
<reference key="1">
    <citation type="submission" date="2008-02" db="EMBL/GenBank/DDBJ databases">
        <title>Complete sequence of Escherichia coli C str. ATCC 8739.</title>
        <authorList>
            <person name="Copeland A."/>
            <person name="Lucas S."/>
            <person name="Lapidus A."/>
            <person name="Glavina del Rio T."/>
            <person name="Dalin E."/>
            <person name="Tice H."/>
            <person name="Bruce D."/>
            <person name="Goodwin L."/>
            <person name="Pitluck S."/>
            <person name="Kiss H."/>
            <person name="Brettin T."/>
            <person name="Detter J.C."/>
            <person name="Han C."/>
            <person name="Kuske C.R."/>
            <person name="Schmutz J."/>
            <person name="Larimer F."/>
            <person name="Land M."/>
            <person name="Hauser L."/>
            <person name="Kyrpides N."/>
            <person name="Mikhailova N."/>
            <person name="Ingram L."/>
            <person name="Richardson P."/>
        </authorList>
    </citation>
    <scope>NUCLEOTIDE SEQUENCE [LARGE SCALE GENOMIC DNA]</scope>
    <source>
        <strain>ATCC 8739 / DSM 1576 / NBRC 3972 / NCIMB 8545 / WDCM 00012 / Crooks</strain>
    </source>
</reference>
<protein>
    <recommendedName>
        <fullName evidence="1">tRNA pseudouridine synthase A</fullName>
        <ecNumber evidence="1">5.4.99.12</ecNumber>
    </recommendedName>
    <alternativeName>
        <fullName evidence="1">tRNA pseudouridine(38-40) synthase</fullName>
    </alternativeName>
    <alternativeName>
        <fullName evidence="1">tRNA pseudouridylate synthase I</fullName>
    </alternativeName>
    <alternativeName>
        <fullName evidence="1">tRNA-uridine isomerase I</fullName>
    </alternativeName>
</protein>